<organism>
    <name type="scientific">Leptospira interrogans serogroup Icterohaemorrhagiae serovar copenhageni (strain Fiocruz L1-130)</name>
    <dbReference type="NCBI Taxonomy" id="267671"/>
    <lineage>
        <taxon>Bacteria</taxon>
        <taxon>Pseudomonadati</taxon>
        <taxon>Spirochaetota</taxon>
        <taxon>Spirochaetia</taxon>
        <taxon>Leptospirales</taxon>
        <taxon>Leptospiraceae</taxon>
        <taxon>Leptospira</taxon>
    </lineage>
</organism>
<reference key="1">
    <citation type="journal article" date="2004" name="J. Bacteriol.">
        <title>Comparative genomics of two Leptospira interrogans serovars reveals novel insights into physiology and pathogenesis.</title>
        <authorList>
            <person name="Nascimento A.L.T.O."/>
            <person name="Ko A.I."/>
            <person name="Martins E.A.L."/>
            <person name="Monteiro-Vitorello C.B."/>
            <person name="Ho P.L."/>
            <person name="Haake D.A."/>
            <person name="Verjovski-Almeida S."/>
            <person name="Hartskeerl R.A."/>
            <person name="Marques M.V."/>
            <person name="Oliveira M.C."/>
            <person name="Menck C.F.M."/>
            <person name="Leite L.C.C."/>
            <person name="Carrer H."/>
            <person name="Coutinho L.L."/>
            <person name="Degrave W.M."/>
            <person name="Dellagostin O.A."/>
            <person name="El-Dorry H."/>
            <person name="Ferro E.S."/>
            <person name="Ferro M.I.T."/>
            <person name="Furlan L.R."/>
            <person name="Gamberini M."/>
            <person name="Giglioti E.A."/>
            <person name="Goes-Neto A."/>
            <person name="Goldman G.H."/>
            <person name="Goldman M.H.S."/>
            <person name="Harakava R."/>
            <person name="Jeronimo S.M.B."/>
            <person name="Junqueira-de-Azevedo I.L.M."/>
            <person name="Kimura E.T."/>
            <person name="Kuramae E.E."/>
            <person name="Lemos E.G.M."/>
            <person name="Lemos M.V.F."/>
            <person name="Marino C.L."/>
            <person name="Nunes L.R."/>
            <person name="de Oliveira R.C."/>
            <person name="Pereira G.G."/>
            <person name="Reis M.S."/>
            <person name="Schriefer A."/>
            <person name="Siqueira W.J."/>
            <person name="Sommer P."/>
            <person name="Tsai S.M."/>
            <person name="Simpson A.J.G."/>
            <person name="Ferro J.A."/>
            <person name="Camargo L.E.A."/>
            <person name="Kitajima J.P."/>
            <person name="Setubal J.C."/>
            <person name="Van Sluys M.A."/>
        </authorList>
    </citation>
    <scope>NUCLEOTIDE SEQUENCE [LARGE SCALE GENOMIC DNA]</scope>
    <source>
        <strain>Fiocruz L1-130</strain>
    </source>
</reference>
<feature type="chain" id="PRO_0000137783" description="Argininosuccinate lyase">
    <location>
        <begin position="1"/>
        <end position="470"/>
    </location>
</feature>
<gene>
    <name evidence="1" type="primary">argH</name>
    <name type="ordered locus">LIC_11840</name>
</gene>
<evidence type="ECO:0000255" key="1">
    <source>
        <dbReference type="HAMAP-Rule" id="MF_00006"/>
    </source>
</evidence>
<dbReference type="EC" id="4.3.2.1" evidence="1"/>
<dbReference type="EMBL" id="AE016823">
    <property type="protein sequence ID" value="AAS70426.1"/>
    <property type="molecule type" value="Genomic_DNA"/>
</dbReference>
<dbReference type="RefSeq" id="WP_000136475.1">
    <property type="nucleotide sequence ID" value="NC_005823.1"/>
</dbReference>
<dbReference type="SMR" id="Q72RA8"/>
<dbReference type="GeneID" id="61141737"/>
<dbReference type="KEGG" id="lic:LIC_11840"/>
<dbReference type="HOGENOM" id="CLU_027272_2_3_12"/>
<dbReference type="UniPathway" id="UPA00068">
    <property type="reaction ID" value="UER00114"/>
</dbReference>
<dbReference type="Proteomes" id="UP000007037">
    <property type="component" value="Chromosome I"/>
</dbReference>
<dbReference type="GO" id="GO:0005829">
    <property type="term" value="C:cytosol"/>
    <property type="evidence" value="ECO:0007669"/>
    <property type="project" value="TreeGrafter"/>
</dbReference>
<dbReference type="GO" id="GO:0004056">
    <property type="term" value="F:argininosuccinate lyase activity"/>
    <property type="evidence" value="ECO:0007669"/>
    <property type="project" value="UniProtKB-UniRule"/>
</dbReference>
<dbReference type="GO" id="GO:0042450">
    <property type="term" value="P:arginine biosynthetic process via ornithine"/>
    <property type="evidence" value="ECO:0007669"/>
    <property type="project" value="InterPro"/>
</dbReference>
<dbReference type="GO" id="GO:0006526">
    <property type="term" value="P:L-arginine biosynthetic process"/>
    <property type="evidence" value="ECO:0007669"/>
    <property type="project" value="UniProtKB-UniRule"/>
</dbReference>
<dbReference type="CDD" id="cd01359">
    <property type="entry name" value="Argininosuccinate_lyase"/>
    <property type="match status" value="1"/>
</dbReference>
<dbReference type="FunFam" id="1.10.275.10:FF:000002">
    <property type="entry name" value="Argininosuccinate lyase"/>
    <property type="match status" value="1"/>
</dbReference>
<dbReference type="FunFam" id="1.10.40.30:FF:000001">
    <property type="entry name" value="Argininosuccinate lyase"/>
    <property type="match status" value="1"/>
</dbReference>
<dbReference type="FunFam" id="1.20.200.10:FF:000015">
    <property type="entry name" value="argininosuccinate lyase isoform X2"/>
    <property type="match status" value="1"/>
</dbReference>
<dbReference type="Gene3D" id="1.10.40.30">
    <property type="entry name" value="Fumarase/aspartase (C-terminal domain)"/>
    <property type="match status" value="1"/>
</dbReference>
<dbReference type="Gene3D" id="1.20.200.10">
    <property type="entry name" value="Fumarase/aspartase (Central domain)"/>
    <property type="match status" value="1"/>
</dbReference>
<dbReference type="Gene3D" id="1.10.275.10">
    <property type="entry name" value="Fumarase/aspartase (N-terminal domain)"/>
    <property type="match status" value="1"/>
</dbReference>
<dbReference type="HAMAP" id="MF_00006">
    <property type="entry name" value="Arg_succ_lyase"/>
    <property type="match status" value="1"/>
</dbReference>
<dbReference type="InterPro" id="IPR029419">
    <property type="entry name" value="Arg_succ_lyase_C"/>
</dbReference>
<dbReference type="InterPro" id="IPR009049">
    <property type="entry name" value="Argininosuccinate_lyase"/>
</dbReference>
<dbReference type="InterPro" id="IPR024083">
    <property type="entry name" value="Fumarase/histidase_N"/>
</dbReference>
<dbReference type="InterPro" id="IPR020557">
    <property type="entry name" value="Fumarate_lyase_CS"/>
</dbReference>
<dbReference type="InterPro" id="IPR000362">
    <property type="entry name" value="Fumarate_lyase_fam"/>
</dbReference>
<dbReference type="InterPro" id="IPR022761">
    <property type="entry name" value="Fumarate_lyase_N"/>
</dbReference>
<dbReference type="InterPro" id="IPR008948">
    <property type="entry name" value="L-Aspartase-like"/>
</dbReference>
<dbReference type="NCBIfam" id="TIGR00838">
    <property type="entry name" value="argH"/>
    <property type="match status" value="1"/>
</dbReference>
<dbReference type="PANTHER" id="PTHR43814">
    <property type="entry name" value="ARGININOSUCCINATE LYASE"/>
    <property type="match status" value="1"/>
</dbReference>
<dbReference type="PANTHER" id="PTHR43814:SF1">
    <property type="entry name" value="ARGININOSUCCINATE LYASE"/>
    <property type="match status" value="1"/>
</dbReference>
<dbReference type="Pfam" id="PF14698">
    <property type="entry name" value="ASL_C2"/>
    <property type="match status" value="1"/>
</dbReference>
<dbReference type="Pfam" id="PF00206">
    <property type="entry name" value="Lyase_1"/>
    <property type="match status" value="1"/>
</dbReference>
<dbReference type="PRINTS" id="PR00145">
    <property type="entry name" value="ARGSUCLYASE"/>
</dbReference>
<dbReference type="PRINTS" id="PR00149">
    <property type="entry name" value="FUMRATELYASE"/>
</dbReference>
<dbReference type="SUPFAM" id="SSF48557">
    <property type="entry name" value="L-aspartase-like"/>
    <property type="match status" value="1"/>
</dbReference>
<dbReference type="PROSITE" id="PS00163">
    <property type="entry name" value="FUMARATE_LYASES"/>
    <property type="match status" value="1"/>
</dbReference>
<name>ARLY_LEPIC</name>
<keyword id="KW-0028">Amino-acid biosynthesis</keyword>
<keyword id="KW-0055">Arginine biosynthesis</keyword>
<keyword id="KW-0963">Cytoplasm</keyword>
<keyword id="KW-0456">Lyase</keyword>
<proteinExistence type="inferred from homology"/>
<protein>
    <recommendedName>
        <fullName evidence="1">Argininosuccinate lyase</fullName>
        <shortName evidence="1">ASAL</shortName>
        <ecNumber evidence="1">4.3.2.1</ecNumber>
    </recommendedName>
    <alternativeName>
        <fullName evidence="1">Arginosuccinase</fullName>
    </alternativeName>
</protein>
<comment type="catalytic activity">
    <reaction evidence="1">
        <text>2-(N(omega)-L-arginino)succinate = fumarate + L-arginine</text>
        <dbReference type="Rhea" id="RHEA:24020"/>
        <dbReference type="ChEBI" id="CHEBI:29806"/>
        <dbReference type="ChEBI" id="CHEBI:32682"/>
        <dbReference type="ChEBI" id="CHEBI:57472"/>
        <dbReference type="EC" id="4.3.2.1"/>
    </reaction>
</comment>
<comment type="pathway">
    <text evidence="1">Amino-acid biosynthesis; L-arginine biosynthesis; L-arginine from L-ornithine and carbamoyl phosphate: step 3/3.</text>
</comment>
<comment type="subcellular location">
    <subcellularLocation>
        <location evidence="1">Cytoplasm</location>
    </subcellularLocation>
</comment>
<comment type="similarity">
    <text evidence="1">Belongs to the lyase 1 family. Argininosuccinate lyase subfamily.</text>
</comment>
<accession>Q72RA8</accession>
<sequence length="470" mass="53352">MTEKEKKLWGGRFQENASSILERIGQSISFDHKLYKEDIQGSIAHARMLKQIGILNSEELSKIEIALAQIKTELEEGKFEFKSELEDIHMHIEFRLTELIGETGKKLHTARSRNDQVTQDVRLYILNQGKEILKSIINLRSSLYQKAKQSLDVIIPGYTHLQIAQPIRASQYLLSWFWALERDQEFFRFAFKASEELALGSGAMAGVNYPTDREFLKKELGLSKVSPNSMDGVSSRDHILEFLFACTQLMIHVSRICEDIILYSSQEFGILKLPDSLTTGSSIMPQKKNPDIAELIRGKSGRVIGNLNHLLVMLKGLPSTYNRDLQEDKLALFDSIETVQISLEGIREMIEGWIWIPERAEVSLKNGFATATDLADFLVNEKKIPFRTAHELVGTLVGVCVKQKKTLFDLPESDRVSISKYFVGKEYEDAVSLSLSADKKISYGGTSKKRQEEQLKIALDSLKEAERLFL</sequence>